<feature type="chain" id="PRO_0000206388" description="3-ketoacyl-CoA thiolase">
    <location>
        <begin position="1"/>
        <end position="387"/>
    </location>
</feature>
<feature type="active site" description="Acyl-thioester intermediate" evidence="1">
    <location>
        <position position="91"/>
    </location>
</feature>
<feature type="active site" description="Proton acceptor" evidence="1">
    <location>
        <position position="343"/>
    </location>
</feature>
<feature type="active site" description="Proton acceptor" evidence="1">
    <location>
        <position position="373"/>
    </location>
</feature>
<protein>
    <recommendedName>
        <fullName evidence="1">3-ketoacyl-CoA thiolase</fullName>
        <ecNumber evidence="1">2.3.1.16</ecNumber>
    </recommendedName>
    <alternativeName>
        <fullName evidence="1">Acetyl-CoA acyltransferase</fullName>
    </alternativeName>
    <alternativeName>
        <fullName evidence="1">Beta-ketothiolase</fullName>
    </alternativeName>
    <alternativeName>
        <fullName evidence="1">Fatty acid oxidation complex subunit beta</fullName>
    </alternativeName>
</protein>
<gene>
    <name evidence="1" type="primary">fadA</name>
    <name type="ordered locus">SCH_3879</name>
</gene>
<proteinExistence type="inferred from homology"/>
<name>FADA_SALCH</name>
<organism>
    <name type="scientific">Salmonella choleraesuis (strain SC-B67)</name>
    <dbReference type="NCBI Taxonomy" id="321314"/>
    <lineage>
        <taxon>Bacteria</taxon>
        <taxon>Pseudomonadati</taxon>
        <taxon>Pseudomonadota</taxon>
        <taxon>Gammaproteobacteria</taxon>
        <taxon>Enterobacterales</taxon>
        <taxon>Enterobacteriaceae</taxon>
        <taxon>Salmonella</taxon>
    </lineage>
</organism>
<accession>Q57HM7</accession>
<evidence type="ECO:0000255" key="1">
    <source>
        <dbReference type="HAMAP-Rule" id="MF_01620"/>
    </source>
</evidence>
<keyword id="KW-0012">Acyltransferase</keyword>
<keyword id="KW-0963">Cytoplasm</keyword>
<keyword id="KW-0276">Fatty acid metabolism</keyword>
<keyword id="KW-0442">Lipid degradation</keyword>
<keyword id="KW-0443">Lipid metabolism</keyword>
<keyword id="KW-0808">Transferase</keyword>
<comment type="function">
    <text evidence="1">Catalyzes the final step of fatty acid oxidation in which acetyl-CoA is released and the CoA ester of a fatty acid two carbons shorter is formed.</text>
</comment>
<comment type="catalytic activity">
    <reaction evidence="1">
        <text>an acyl-CoA + acetyl-CoA = a 3-oxoacyl-CoA + CoA</text>
        <dbReference type="Rhea" id="RHEA:21564"/>
        <dbReference type="ChEBI" id="CHEBI:57287"/>
        <dbReference type="ChEBI" id="CHEBI:57288"/>
        <dbReference type="ChEBI" id="CHEBI:58342"/>
        <dbReference type="ChEBI" id="CHEBI:90726"/>
        <dbReference type="EC" id="2.3.1.16"/>
    </reaction>
</comment>
<comment type="pathway">
    <text evidence="1">Lipid metabolism; fatty acid beta-oxidation.</text>
</comment>
<comment type="subunit">
    <text evidence="1">Heterotetramer of two alpha chains (FadB) and two beta chains (FadA).</text>
</comment>
<comment type="subcellular location">
    <subcellularLocation>
        <location evidence="1">Cytoplasm</location>
    </subcellularLocation>
</comment>
<comment type="similarity">
    <text evidence="1">Belongs to the thiolase-like superfamily. Thiolase family.</text>
</comment>
<dbReference type="EC" id="2.3.1.16" evidence="1"/>
<dbReference type="EMBL" id="AE017220">
    <property type="protein sequence ID" value="AAX67785.1"/>
    <property type="molecule type" value="Genomic_DNA"/>
</dbReference>
<dbReference type="RefSeq" id="WP_000438715.1">
    <property type="nucleotide sequence ID" value="NC_006905.1"/>
</dbReference>
<dbReference type="SMR" id="Q57HM7"/>
<dbReference type="KEGG" id="sec:SCH_3879"/>
<dbReference type="HOGENOM" id="CLU_031026_2_3_6"/>
<dbReference type="UniPathway" id="UPA00659"/>
<dbReference type="Proteomes" id="UP000000538">
    <property type="component" value="Chromosome"/>
</dbReference>
<dbReference type="GO" id="GO:0005737">
    <property type="term" value="C:cytoplasm"/>
    <property type="evidence" value="ECO:0007669"/>
    <property type="project" value="UniProtKB-SubCell"/>
</dbReference>
<dbReference type="GO" id="GO:0003988">
    <property type="term" value="F:acetyl-CoA C-acyltransferase activity"/>
    <property type="evidence" value="ECO:0007669"/>
    <property type="project" value="UniProtKB-UniRule"/>
</dbReference>
<dbReference type="GO" id="GO:0006635">
    <property type="term" value="P:fatty acid beta-oxidation"/>
    <property type="evidence" value="ECO:0007669"/>
    <property type="project" value="UniProtKB-UniRule"/>
</dbReference>
<dbReference type="GO" id="GO:0010124">
    <property type="term" value="P:phenylacetate catabolic process"/>
    <property type="evidence" value="ECO:0007669"/>
    <property type="project" value="TreeGrafter"/>
</dbReference>
<dbReference type="CDD" id="cd00751">
    <property type="entry name" value="thiolase"/>
    <property type="match status" value="1"/>
</dbReference>
<dbReference type="FunFam" id="3.40.47.10:FF:000010">
    <property type="entry name" value="Acetyl-CoA acetyltransferase (Thiolase)"/>
    <property type="match status" value="1"/>
</dbReference>
<dbReference type="Gene3D" id="3.40.47.10">
    <property type="match status" value="2"/>
</dbReference>
<dbReference type="HAMAP" id="MF_01620">
    <property type="entry name" value="FadA"/>
    <property type="match status" value="1"/>
</dbReference>
<dbReference type="InterPro" id="IPR012805">
    <property type="entry name" value="FadA"/>
</dbReference>
<dbReference type="InterPro" id="IPR002155">
    <property type="entry name" value="Thiolase"/>
</dbReference>
<dbReference type="InterPro" id="IPR016039">
    <property type="entry name" value="Thiolase-like"/>
</dbReference>
<dbReference type="InterPro" id="IPR050215">
    <property type="entry name" value="Thiolase-like_sf_Thiolase"/>
</dbReference>
<dbReference type="InterPro" id="IPR020615">
    <property type="entry name" value="Thiolase_acyl_enz_int_AS"/>
</dbReference>
<dbReference type="InterPro" id="IPR020610">
    <property type="entry name" value="Thiolase_AS"/>
</dbReference>
<dbReference type="InterPro" id="IPR020617">
    <property type="entry name" value="Thiolase_C"/>
</dbReference>
<dbReference type="InterPro" id="IPR020613">
    <property type="entry name" value="Thiolase_CS"/>
</dbReference>
<dbReference type="InterPro" id="IPR020616">
    <property type="entry name" value="Thiolase_N"/>
</dbReference>
<dbReference type="NCBIfam" id="TIGR01930">
    <property type="entry name" value="AcCoA-C-Actrans"/>
    <property type="match status" value="1"/>
</dbReference>
<dbReference type="NCBIfam" id="TIGR02445">
    <property type="entry name" value="fadA"/>
    <property type="match status" value="1"/>
</dbReference>
<dbReference type="NCBIfam" id="NF006510">
    <property type="entry name" value="PRK08947.1"/>
    <property type="match status" value="1"/>
</dbReference>
<dbReference type="PANTHER" id="PTHR43853:SF11">
    <property type="entry name" value="3-KETOACYL-COA THIOLASE FADA"/>
    <property type="match status" value="1"/>
</dbReference>
<dbReference type="PANTHER" id="PTHR43853">
    <property type="entry name" value="3-KETOACYL-COA THIOLASE, PEROXISOMAL"/>
    <property type="match status" value="1"/>
</dbReference>
<dbReference type="Pfam" id="PF02803">
    <property type="entry name" value="Thiolase_C"/>
    <property type="match status" value="1"/>
</dbReference>
<dbReference type="Pfam" id="PF00108">
    <property type="entry name" value="Thiolase_N"/>
    <property type="match status" value="1"/>
</dbReference>
<dbReference type="PIRSF" id="PIRSF000429">
    <property type="entry name" value="Ac-CoA_Ac_transf"/>
    <property type="match status" value="1"/>
</dbReference>
<dbReference type="SUPFAM" id="SSF53901">
    <property type="entry name" value="Thiolase-like"/>
    <property type="match status" value="2"/>
</dbReference>
<dbReference type="PROSITE" id="PS00098">
    <property type="entry name" value="THIOLASE_1"/>
    <property type="match status" value="1"/>
</dbReference>
<dbReference type="PROSITE" id="PS00737">
    <property type="entry name" value="THIOLASE_2"/>
    <property type="match status" value="1"/>
</dbReference>
<dbReference type="PROSITE" id="PS00099">
    <property type="entry name" value="THIOLASE_3"/>
    <property type="match status" value="1"/>
</dbReference>
<sequence length="387" mass="41034">MEQVVIVDAIRTPMGRSKGGAFRNERAEDLSAHLMRSLLARNPSLTAATLDDIYWGCVQQTLEQGFNIARNAALLAEIPHSVPAVTVNRLCGSSMQALHDAARMIMTGDAQVCLVGGVEHMGHVPMSHGVDFHPGLSRNVAKAAGMMGLTAEMLSRLHGISREMQDQFAARSHARAWAATQSGAFKTEIIPTGGHDADGVLKQFNYDEVIRPETTVEALSTLRPAFDPVSGTVTAGTSSALSDGAAAMLVMSESRARELGLKPRARIRSMAVVGCDPSIMGYGPVPASKLALKKAGLSASDIDVFEMNEAFAAQILPCIKDLGLMEQIDEKINLNGGAIALGHPLGCSGARISTTLINLMERKDAQFGLATMCIGLGQGIATVFERV</sequence>
<reference key="1">
    <citation type="journal article" date="2005" name="Nucleic Acids Res.">
        <title>The genome sequence of Salmonella enterica serovar Choleraesuis, a highly invasive and resistant zoonotic pathogen.</title>
        <authorList>
            <person name="Chiu C.-H."/>
            <person name="Tang P."/>
            <person name="Chu C."/>
            <person name="Hu S."/>
            <person name="Bao Q."/>
            <person name="Yu J."/>
            <person name="Chou Y.-Y."/>
            <person name="Wang H.-S."/>
            <person name="Lee Y.-S."/>
        </authorList>
    </citation>
    <scope>NUCLEOTIDE SEQUENCE [LARGE SCALE GENOMIC DNA]</scope>
    <source>
        <strain>SC-B67</strain>
    </source>
</reference>